<name>UGE1_ORYSJ</name>
<sequence>MVSALLRTILVTGGAGYIGSHTVLQLLQLGFRVVVLDNLDNASELAILRVRELAGHNANNLDFRKVDLRDKQALDQIFSSQRFEAVIHFAGLKAVGESVQKPLLYYDNNLIGTITLLQVMAAHGCTKLVFSSSATVYGWPKEVPCTEESPLCAMNPYGRTKLVIEDMCRDLHASDPNWKIILLRYFNPVGAHPSGYIGEDPCGIPNNLMPFVQQVAVGRRPALTVYGTDYNTKDGTGVRDYIHVVDLADGHIAALRKLYEDSDRIGCEVYNLGTGKGTSVLEMVAAFEKASGKKIPLVFAGRRPGDAEIVYAQTAKAEKELKWKAKYGVEEMCRDLWNWASKNPYGYGSPDSSN</sequence>
<feature type="chain" id="PRO_0000422188" description="UDP-glucose 4-epimerase 1">
    <location>
        <begin position="1"/>
        <end position="354"/>
    </location>
</feature>
<feature type="active site" description="Proton acceptor" evidence="1">
    <location>
        <position position="157"/>
    </location>
</feature>
<feature type="binding site" evidence="1">
    <location>
        <begin position="8"/>
        <end position="39"/>
    </location>
    <ligand>
        <name>NAD(+)</name>
        <dbReference type="ChEBI" id="CHEBI:57540"/>
    </ligand>
</feature>
<feature type="binding site" evidence="1">
    <location>
        <position position="133"/>
    </location>
    <ligand>
        <name>substrate</name>
    </ligand>
</feature>
<reference key="1">
    <citation type="submission" date="2002-07" db="EMBL/GenBank/DDBJ databases">
        <title>Cloning of UDP-glucose 4-epimerase gene in Oryza sativa.</title>
        <authorList>
            <person name="Suzuki K."/>
            <person name="Kitamura S."/>
        </authorList>
    </citation>
    <scope>NUCLEOTIDE SEQUENCE [MRNA]</scope>
    <source>
        <strain>cv. Nipponbare</strain>
        <tissue>Immature seed</tissue>
    </source>
</reference>
<reference key="2">
    <citation type="journal article" date="2005" name="Mol. Genet. Genomics">
        <title>A fine physical map of the rice chromosome 5.</title>
        <authorList>
            <person name="Cheng C.-H."/>
            <person name="Chung M.C."/>
            <person name="Liu S.-M."/>
            <person name="Chen S.-K."/>
            <person name="Kao F.Y."/>
            <person name="Lin S.-J."/>
            <person name="Hsiao S.-H."/>
            <person name="Tseng I.C."/>
            <person name="Hsing Y.-I.C."/>
            <person name="Wu H.-P."/>
            <person name="Chen C.-S."/>
            <person name="Shaw J.-F."/>
            <person name="Wu J."/>
            <person name="Matsumoto T."/>
            <person name="Sasaki T."/>
            <person name="Chen H.-C."/>
            <person name="Chow T.-Y."/>
        </authorList>
    </citation>
    <scope>NUCLEOTIDE SEQUENCE [LARGE SCALE GENOMIC DNA]</scope>
    <source>
        <strain>cv. Nipponbare</strain>
    </source>
</reference>
<reference key="3">
    <citation type="journal article" date="2005" name="Nature">
        <title>The map-based sequence of the rice genome.</title>
        <authorList>
            <consortium name="International rice genome sequencing project (IRGSP)"/>
        </authorList>
    </citation>
    <scope>NUCLEOTIDE SEQUENCE [LARGE SCALE GENOMIC DNA]</scope>
    <source>
        <strain>cv. Nipponbare</strain>
    </source>
</reference>
<reference key="4">
    <citation type="journal article" date="2008" name="Nucleic Acids Res.">
        <title>The rice annotation project database (RAP-DB): 2008 update.</title>
        <authorList>
            <consortium name="The rice annotation project (RAP)"/>
        </authorList>
    </citation>
    <scope>GENOME REANNOTATION</scope>
    <source>
        <strain>cv. Nipponbare</strain>
    </source>
</reference>
<reference key="5">
    <citation type="journal article" date="2013" name="Rice">
        <title>Improvement of the Oryza sativa Nipponbare reference genome using next generation sequence and optical map data.</title>
        <authorList>
            <person name="Kawahara Y."/>
            <person name="de la Bastide M."/>
            <person name="Hamilton J.P."/>
            <person name="Kanamori H."/>
            <person name="McCombie W.R."/>
            <person name="Ouyang S."/>
            <person name="Schwartz D.C."/>
            <person name="Tanaka T."/>
            <person name="Wu J."/>
            <person name="Zhou S."/>
            <person name="Childs K.L."/>
            <person name="Davidson R.M."/>
            <person name="Lin H."/>
            <person name="Quesada-Ocampo L."/>
            <person name="Vaillancourt B."/>
            <person name="Sakai H."/>
            <person name="Lee S.S."/>
            <person name="Kim J."/>
            <person name="Numa H."/>
            <person name="Itoh T."/>
            <person name="Buell C.R."/>
            <person name="Matsumoto T."/>
        </authorList>
    </citation>
    <scope>GENOME REANNOTATION</scope>
    <source>
        <strain>cv. Nipponbare</strain>
    </source>
</reference>
<reference key="6">
    <citation type="journal article" date="2005" name="PLoS Biol.">
        <title>The genomes of Oryza sativa: a history of duplications.</title>
        <authorList>
            <person name="Yu J."/>
            <person name="Wang J."/>
            <person name="Lin W."/>
            <person name="Li S."/>
            <person name="Li H."/>
            <person name="Zhou J."/>
            <person name="Ni P."/>
            <person name="Dong W."/>
            <person name="Hu S."/>
            <person name="Zeng C."/>
            <person name="Zhang J."/>
            <person name="Zhang Y."/>
            <person name="Li R."/>
            <person name="Xu Z."/>
            <person name="Li S."/>
            <person name="Li X."/>
            <person name="Zheng H."/>
            <person name="Cong L."/>
            <person name="Lin L."/>
            <person name="Yin J."/>
            <person name="Geng J."/>
            <person name="Li G."/>
            <person name="Shi J."/>
            <person name="Liu J."/>
            <person name="Lv H."/>
            <person name="Li J."/>
            <person name="Wang J."/>
            <person name="Deng Y."/>
            <person name="Ran L."/>
            <person name="Shi X."/>
            <person name="Wang X."/>
            <person name="Wu Q."/>
            <person name="Li C."/>
            <person name="Ren X."/>
            <person name="Wang J."/>
            <person name="Wang X."/>
            <person name="Li D."/>
            <person name="Liu D."/>
            <person name="Zhang X."/>
            <person name="Ji Z."/>
            <person name="Zhao W."/>
            <person name="Sun Y."/>
            <person name="Zhang Z."/>
            <person name="Bao J."/>
            <person name="Han Y."/>
            <person name="Dong L."/>
            <person name="Ji J."/>
            <person name="Chen P."/>
            <person name="Wu S."/>
            <person name="Liu J."/>
            <person name="Xiao Y."/>
            <person name="Bu D."/>
            <person name="Tan J."/>
            <person name="Yang L."/>
            <person name="Ye C."/>
            <person name="Zhang J."/>
            <person name="Xu J."/>
            <person name="Zhou Y."/>
            <person name="Yu Y."/>
            <person name="Zhang B."/>
            <person name="Zhuang S."/>
            <person name="Wei H."/>
            <person name="Liu B."/>
            <person name="Lei M."/>
            <person name="Yu H."/>
            <person name="Li Y."/>
            <person name="Xu H."/>
            <person name="Wei S."/>
            <person name="He X."/>
            <person name="Fang L."/>
            <person name="Zhang Z."/>
            <person name="Zhang Y."/>
            <person name="Huang X."/>
            <person name="Su Z."/>
            <person name="Tong W."/>
            <person name="Li J."/>
            <person name="Tong Z."/>
            <person name="Li S."/>
            <person name="Ye J."/>
            <person name="Wang L."/>
            <person name="Fang L."/>
            <person name="Lei T."/>
            <person name="Chen C.-S."/>
            <person name="Chen H.-C."/>
            <person name="Xu Z."/>
            <person name="Li H."/>
            <person name="Huang H."/>
            <person name="Zhang F."/>
            <person name="Xu H."/>
            <person name="Li N."/>
            <person name="Zhao C."/>
            <person name="Li S."/>
            <person name="Dong L."/>
            <person name="Huang Y."/>
            <person name="Li L."/>
            <person name="Xi Y."/>
            <person name="Qi Q."/>
            <person name="Li W."/>
            <person name="Zhang B."/>
            <person name="Hu W."/>
            <person name="Zhang Y."/>
            <person name="Tian X."/>
            <person name="Jiao Y."/>
            <person name="Liang X."/>
            <person name="Jin J."/>
            <person name="Gao L."/>
            <person name="Zheng W."/>
            <person name="Hao B."/>
            <person name="Liu S.-M."/>
            <person name="Wang W."/>
            <person name="Yuan L."/>
            <person name="Cao M."/>
            <person name="McDermott J."/>
            <person name="Samudrala R."/>
            <person name="Wang J."/>
            <person name="Wong G.K.-S."/>
            <person name="Yang H."/>
        </authorList>
    </citation>
    <scope>NUCLEOTIDE SEQUENCE [LARGE SCALE GENOMIC DNA]</scope>
    <source>
        <strain>cv. Nipponbare</strain>
    </source>
</reference>
<reference key="7">
    <citation type="journal article" date="2006" name="Biochem. J.">
        <title>Gene expression patterns and catalytic properties of UDP-D-glucose 4-epimerases from barley (Hordeum vulgare L.).</title>
        <authorList>
            <person name="Zhang Q."/>
            <person name="Hrmova M."/>
            <person name="Shirley N.J."/>
            <person name="Lahnstein J."/>
            <person name="Fincher G.B."/>
        </authorList>
    </citation>
    <scope>GENE FAMILY</scope>
</reference>
<comment type="function">
    <text evidence="1">Catalyzes the interconversion between UDP-glucose and UDP-galactose.</text>
</comment>
<comment type="catalytic activity">
    <reaction>
        <text>UDP-alpha-D-glucose = UDP-alpha-D-galactose</text>
        <dbReference type="Rhea" id="RHEA:22168"/>
        <dbReference type="ChEBI" id="CHEBI:58885"/>
        <dbReference type="ChEBI" id="CHEBI:66914"/>
        <dbReference type="EC" id="5.1.3.2"/>
    </reaction>
</comment>
<comment type="cofactor">
    <cofactor evidence="1">
        <name>NAD(+)</name>
        <dbReference type="ChEBI" id="CHEBI:57540"/>
    </cofactor>
</comment>
<comment type="pathway">
    <text>Carbohydrate metabolism; galactose metabolism.</text>
</comment>
<comment type="similarity">
    <text evidence="2">Belongs to the NAD(P)-dependent epimerase/dehydratase family.</text>
</comment>
<evidence type="ECO:0000250" key="1"/>
<evidence type="ECO:0000305" key="2"/>
<dbReference type="EC" id="5.1.3.2"/>
<dbReference type="EMBL" id="AB087745">
    <property type="protein sequence ID" value="BAC02925.1"/>
    <property type="molecule type" value="mRNA"/>
</dbReference>
<dbReference type="EMBL" id="AC136217">
    <property type="protein sequence ID" value="AAV59383.1"/>
    <property type="molecule type" value="Genomic_DNA"/>
</dbReference>
<dbReference type="EMBL" id="AP008211">
    <property type="protein sequence ID" value="BAF18426.1"/>
    <property type="molecule type" value="Genomic_DNA"/>
</dbReference>
<dbReference type="EMBL" id="AP014961">
    <property type="status" value="NOT_ANNOTATED_CDS"/>
    <property type="molecule type" value="Genomic_DNA"/>
</dbReference>
<dbReference type="EMBL" id="CM000142">
    <property type="protein sequence ID" value="EEE64916.1"/>
    <property type="molecule type" value="Genomic_DNA"/>
</dbReference>
<dbReference type="RefSeq" id="XP_015640233.1">
    <property type="nucleotide sequence ID" value="XM_015784747.1"/>
</dbReference>
<dbReference type="SMR" id="Q8LNZ3"/>
<dbReference type="FunCoup" id="Q8LNZ3">
    <property type="interactions" value="572"/>
</dbReference>
<dbReference type="STRING" id="39947.Q8LNZ3"/>
<dbReference type="PaxDb" id="39947-Q8LNZ3"/>
<dbReference type="EnsemblPlants" id="Os05t0595100-01">
    <property type="protein sequence ID" value="Os05t0595100-01"/>
    <property type="gene ID" value="Os05g0595100"/>
</dbReference>
<dbReference type="Gramene" id="Os05t0595100-01">
    <property type="protein sequence ID" value="Os05t0595100-01"/>
    <property type="gene ID" value="Os05g0595100"/>
</dbReference>
<dbReference type="KEGG" id="dosa:Os05g0595100"/>
<dbReference type="eggNOG" id="KOG1371">
    <property type="taxonomic scope" value="Eukaryota"/>
</dbReference>
<dbReference type="InParanoid" id="Q8LNZ3"/>
<dbReference type="OrthoDB" id="9402762at2759"/>
<dbReference type="BRENDA" id="5.1.3.2">
    <property type="organism ID" value="8948"/>
</dbReference>
<dbReference type="UniPathway" id="UPA00214"/>
<dbReference type="Proteomes" id="UP000000763">
    <property type="component" value="Chromosome 5"/>
</dbReference>
<dbReference type="Proteomes" id="UP000007752">
    <property type="component" value="Chromosome 5"/>
</dbReference>
<dbReference type="Proteomes" id="UP000059680">
    <property type="component" value="Chromosome 5"/>
</dbReference>
<dbReference type="GO" id="GO:0005829">
    <property type="term" value="C:cytosol"/>
    <property type="evidence" value="ECO:0000318"/>
    <property type="project" value="GO_Central"/>
</dbReference>
<dbReference type="GO" id="GO:0003978">
    <property type="term" value="F:UDP-glucose 4-epimerase activity"/>
    <property type="evidence" value="ECO:0000318"/>
    <property type="project" value="GO_Central"/>
</dbReference>
<dbReference type="GO" id="GO:0006012">
    <property type="term" value="P:galactose metabolic process"/>
    <property type="evidence" value="ECO:0007669"/>
    <property type="project" value="UniProtKB-UniPathway"/>
</dbReference>
<dbReference type="GO" id="GO:0005996">
    <property type="term" value="P:monosaccharide metabolic process"/>
    <property type="evidence" value="ECO:0000318"/>
    <property type="project" value="GO_Central"/>
</dbReference>
<dbReference type="CDD" id="cd05247">
    <property type="entry name" value="UDP_G4E_1_SDR_e"/>
    <property type="match status" value="1"/>
</dbReference>
<dbReference type="FunFam" id="3.40.50.720:FF:000040">
    <property type="entry name" value="UDP-glucose 4-epimerase"/>
    <property type="match status" value="1"/>
</dbReference>
<dbReference type="FunFam" id="3.90.25.10:FF:000060">
    <property type="entry name" value="UDP-glucose 4-epimerase 4"/>
    <property type="match status" value="1"/>
</dbReference>
<dbReference type="Gene3D" id="3.40.50.720">
    <property type="entry name" value="NAD(P)-binding Rossmann-like Domain"/>
    <property type="match status" value="1"/>
</dbReference>
<dbReference type="Gene3D" id="3.90.25.10">
    <property type="entry name" value="UDP-galactose 4-epimerase, domain 1"/>
    <property type="match status" value="1"/>
</dbReference>
<dbReference type="InterPro" id="IPR016040">
    <property type="entry name" value="NAD(P)-bd_dom"/>
</dbReference>
<dbReference type="InterPro" id="IPR036291">
    <property type="entry name" value="NAD(P)-bd_dom_sf"/>
</dbReference>
<dbReference type="InterPro" id="IPR005886">
    <property type="entry name" value="UDP_G4E"/>
</dbReference>
<dbReference type="NCBIfam" id="TIGR01179">
    <property type="entry name" value="galE"/>
    <property type="match status" value="1"/>
</dbReference>
<dbReference type="NCBIfam" id="NF007956">
    <property type="entry name" value="PRK10675.1"/>
    <property type="match status" value="1"/>
</dbReference>
<dbReference type="PANTHER" id="PTHR43725">
    <property type="entry name" value="UDP-GLUCOSE 4-EPIMERASE"/>
    <property type="match status" value="1"/>
</dbReference>
<dbReference type="PANTHER" id="PTHR43725:SF47">
    <property type="entry name" value="UDP-GLUCOSE 4-EPIMERASE"/>
    <property type="match status" value="1"/>
</dbReference>
<dbReference type="Pfam" id="PF16363">
    <property type="entry name" value="GDP_Man_Dehyd"/>
    <property type="match status" value="1"/>
</dbReference>
<dbReference type="SUPFAM" id="SSF51735">
    <property type="entry name" value="NAD(P)-binding Rossmann-fold domains"/>
    <property type="match status" value="1"/>
</dbReference>
<keyword id="KW-0413">Isomerase</keyword>
<keyword id="KW-0520">NAD</keyword>
<keyword id="KW-1185">Reference proteome</keyword>
<organism>
    <name type="scientific">Oryza sativa subsp. japonica</name>
    <name type="common">Rice</name>
    <dbReference type="NCBI Taxonomy" id="39947"/>
    <lineage>
        <taxon>Eukaryota</taxon>
        <taxon>Viridiplantae</taxon>
        <taxon>Streptophyta</taxon>
        <taxon>Embryophyta</taxon>
        <taxon>Tracheophyta</taxon>
        <taxon>Spermatophyta</taxon>
        <taxon>Magnoliopsida</taxon>
        <taxon>Liliopsida</taxon>
        <taxon>Poales</taxon>
        <taxon>Poaceae</taxon>
        <taxon>BOP clade</taxon>
        <taxon>Oryzoideae</taxon>
        <taxon>Oryzeae</taxon>
        <taxon>Oryzinae</taxon>
        <taxon>Oryza</taxon>
        <taxon>Oryza sativa</taxon>
    </lineage>
</organism>
<accession>Q8LNZ3</accession>
<proteinExistence type="evidence at transcript level"/>
<gene>
    <name type="primary">UGE-1</name>
    <name type="ordered locus">Os05g0595100</name>
    <name type="ordered locus">LOC_Os05g51670</name>
    <name type="ORF">OsJ_19776</name>
    <name type="ORF">OSJNBa0030I14.9</name>
</gene>
<protein>
    <recommendedName>
        <fullName>UDP-glucose 4-epimerase 1</fullName>
        <shortName>OsUGE-1</shortName>
        <ecNumber>5.1.3.2</ecNumber>
    </recommendedName>
    <alternativeName>
        <fullName>UDP-galactose 4-epimerase 1</fullName>
    </alternativeName>
</protein>